<comment type="function">
    <text evidence="1">Together with the chaperonin GroEL, plays an essential role in assisting protein folding. The GroEL-GroES system forms a nano-cage that allows encapsulation of the non-native substrate proteins and provides a physical environment optimized to promote and accelerate protein folding. GroES binds to the apical surface of the GroEL ring, thereby capping the opening of the GroEL channel.</text>
</comment>
<comment type="subunit">
    <text evidence="1">Heptamer of 7 subunits arranged in a ring. Interacts with the chaperonin GroEL.</text>
</comment>
<comment type="subcellular location">
    <subcellularLocation>
        <location evidence="1">Cytoplasm</location>
    </subcellularLocation>
</comment>
<comment type="similarity">
    <text evidence="1">Belongs to the GroES chaperonin family.</text>
</comment>
<accession>B0RN51</accession>
<feature type="chain" id="PRO_1000129725" description="Co-chaperonin GroES">
    <location>
        <begin position="1"/>
        <end position="95"/>
    </location>
</feature>
<dbReference type="EMBL" id="AM920689">
    <property type="protein sequence ID" value="CAP49886.1"/>
    <property type="molecule type" value="Genomic_DNA"/>
</dbReference>
<dbReference type="SMR" id="B0RN51"/>
<dbReference type="KEGG" id="xca:xcc-b100_0552"/>
<dbReference type="HOGENOM" id="CLU_132825_2_0_6"/>
<dbReference type="Proteomes" id="UP000001188">
    <property type="component" value="Chromosome"/>
</dbReference>
<dbReference type="GO" id="GO:0005737">
    <property type="term" value="C:cytoplasm"/>
    <property type="evidence" value="ECO:0007669"/>
    <property type="project" value="UniProtKB-SubCell"/>
</dbReference>
<dbReference type="GO" id="GO:0005524">
    <property type="term" value="F:ATP binding"/>
    <property type="evidence" value="ECO:0007669"/>
    <property type="project" value="InterPro"/>
</dbReference>
<dbReference type="GO" id="GO:0046872">
    <property type="term" value="F:metal ion binding"/>
    <property type="evidence" value="ECO:0007669"/>
    <property type="project" value="TreeGrafter"/>
</dbReference>
<dbReference type="GO" id="GO:0044183">
    <property type="term" value="F:protein folding chaperone"/>
    <property type="evidence" value="ECO:0007669"/>
    <property type="project" value="InterPro"/>
</dbReference>
<dbReference type="GO" id="GO:0051087">
    <property type="term" value="F:protein-folding chaperone binding"/>
    <property type="evidence" value="ECO:0007669"/>
    <property type="project" value="TreeGrafter"/>
</dbReference>
<dbReference type="GO" id="GO:0051082">
    <property type="term" value="F:unfolded protein binding"/>
    <property type="evidence" value="ECO:0007669"/>
    <property type="project" value="TreeGrafter"/>
</dbReference>
<dbReference type="GO" id="GO:0051085">
    <property type="term" value="P:chaperone cofactor-dependent protein refolding"/>
    <property type="evidence" value="ECO:0007669"/>
    <property type="project" value="TreeGrafter"/>
</dbReference>
<dbReference type="CDD" id="cd00320">
    <property type="entry name" value="cpn10"/>
    <property type="match status" value="1"/>
</dbReference>
<dbReference type="FunFam" id="2.30.33.40:FF:000001">
    <property type="entry name" value="10 kDa chaperonin"/>
    <property type="match status" value="1"/>
</dbReference>
<dbReference type="Gene3D" id="2.30.33.40">
    <property type="entry name" value="GroES chaperonin"/>
    <property type="match status" value="1"/>
</dbReference>
<dbReference type="HAMAP" id="MF_00580">
    <property type="entry name" value="CH10"/>
    <property type="match status" value="1"/>
</dbReference>
<dbReference type="InterPro" id="IPR020818">
    <property type="entry name" value="Chaperonin_GroES"/>
</dbReference>
<dbReference type="InterPro" id="IPR037124">
    <property type="entry name" value="Chaperonin_GroES_sf"/>
</dbReference>
<dbReference type="InterPro" id="IPR018369">
    <property type="entry name" value="Chaprnonin_Cpn10_CS"/>
</dbReference>
<dbReference type="InterPro" id="IPR011032">
    <property type="entry name" value="GroES-like_sf"/>
</dbReference>
<dbReference type="NCBIfam" id="NF001527">
    <property type="entry name" value="PRK00364.1-2"/>
    <property type="match status" value="1"/>
</dbReference>
<dbReference type="NCBIfam" id="NF001531">
    <property type="entry name" value="PRK00364.2-2"/>
    <property type="match status" value="1"/>
</dbReference>
<dbReference type="NCBIfam" id="NF001533">
    <property type="entry name" value="PRK00364.2-4"/>
    <property type="match status" value="1"/>
</dbReference>
<dbReference type="PANTHER" id="PTHR10772">
    <property type="entry name" value="10 KDA HEAT SHOCK PROTEIN"/>
    <property type="match status" value="1"/>
</dbReference>
<dbReference type="PANTHER" id="PTHR10772:SF58">
    <property type="entry name" value="CO-CHAPERONIN GROES"/>
    <property type="match status" value="1"/>
</dbReference>
<dbReference type="Pfam" id="PF00166">
    <property type="entry name" value="Cpn10"/>
    <property type="match status" value="1"/>
</dbReference>
<dbReference type="PRINTS" id="PR00297">
    <property type="entry name" value="CHAPERONIN10"/>
</dbReference>
<dbReference type="SMART" id="SM00883">
    <property type="entry name" value="Cpn10"/>
    <property type="match status" value="1"/>
</dbReference>
<dbReference type="SUPFAM" id="SSF50129">
    <property type="entry name" value="GroES-like"/>
    <property type="match status" value="1"/>
</dbReference>
<dbReference type="PROSITE" id="PS00681">
    <property type="entry name" value="CHAPERONINS_CPN10"/>
    <property type="match status" value="1"/>
</dbReference>
<proteinExistence type="inferred from homology"/>
<organism>
    <name type="scientific">Xanthomonas campestris pv. campestris (strain B100)</name>
    <dbReference type="NCBI Taxonomy" id="509169"/>
    <lineage>
        <taxon>Bacteria</taxon>
        <taxon>Pseudomonadati</taxon>
        <taxon>Pseudomonadota</taxon>
        <taxon>Gammaproteobacteria</taxon>
        <taxon>Lysobacterales</taxon>
        <taxon>Lysobacteraceae</taxon>
        <taxon>Xanthomonas</taxon>
    </lineage>
</organism>
<keyword id="KW-0143">Chaperone</keyword>
<keyword id="KW-0963">Cytoplasm</keyword>
<gene>
    <name evidence="1" type="primary">groES</name>
    <name evidence="1" type="synonym">groS</name>
    <name type="ordered locus">xcc-b100_0552</name>
</gene>
<evidence type="ECO:0000255" key="1">
    <source>
        <dbReference type="HAMAP-Rule" id="MF_00580"/>
    </source>
</evidence>
<name>CH10_XANCB</name>
<protein>
    <recommendedName>
        <fullName evidence="1">Co-chaperonin GroES</fullName>
    </recommendedName>
    <alternativeName>
        <fullName evidence="1">10 kDa chaperonin</fullName>
    </alternativeName>
    <alternativeName>
        <fullName evidence="1">Chaperonin-10</fullName>
        <shortName evidence="1">Cpn10</shortName>
    </alternativeName>
</protein>
<sequence length="95" mass="9979">MSIKPLHDRVVVKPIEADEVSAGGIVIPDSAKEKSTKGEVVAIGAGKPLDNGSLRAPVVKVGDKVIYGQYAGSSYKSEGVEYKVLREDDILAVIG</sequence>
<reference key="1">
    <citation type="journal article" date="2008" name="J. Biotechnol.">
        <title>The genome of Xanthomonas campestris pv. campestris B100 and its use for the reconstruction of metabolic pathways involved in xanthan biosynthesis.</title>
        <authorList>
            <person name="Vorhoelter F.-J."/>
            <person name="Schneiker S."/>
            <person name="Goesmann A."/>
            <person name="Krause L."/>
            <person name="Bekel T."/>
            <person name="Kaiser O."/>
            <person name="Linke B."/>
            <person name="Patschkowski T."/>
            <person name="Rueckert C."/>
            <person name="Schmid J."/>
            <person name="Sidhu V.K."/>
            <person name="Sieber V."/>
            <person name="Tauch A."/>
            <person name="Watt S.A."/>
            <person name="Weisshaar B."/>
            <person name="Becker A."/>
            <person name="Niehaus K."/>
            <person name="Puehler A."/>
        </authorList>
    </citation>
    <scope>NUCLEOTIDE SEQUENCE [LARGE SCALE GENOMIC DNA]</scope>
    <source>
        <strain>B100</strain>
    </source>
</reference>